<evidence type="ECO:0000255" key="1"/>
<evidence type="ECO:0000305" key="2"/>
<gene>
    <name type="ordered locus">MJ1339</name>
</gene>
<feature type="chain" id="PRO_0000107282" description="Uncharacterized protein MJ1339">
    <location>
        <begin position="1"/>
        <end position="154"/>
    </location>
</feature>
<feature type="domain" description="G">
    <location>
        <begin position="17"/>
        <end position="112"/>
    </location>
</feature>
<feature type="binding site" evidence="1">
    <location>
        <begin position="12"/>
        <end position="19"/>
    </location>
    <ligand>
        <name>GTP</name>
        <dbReference type="ChEBI" id="CHEBI:37565"/>
    </ligand>
</feature>
<accession>Q58735</accession>
<protein>
    <recommendedName>
        <fullName>Uncharacterized protein MJ1339</fullName>
    </recommendedName>
</protein>
<proteinExistence type="predicted"/>
<reference key="1">
    <citation type="journal article" date="1996" name="Science">
        <title>Complete genome sequence of the methanogenic archaeon, Methanococcus jannaschii.</title>
        <authorList>
            <person name="Bult C.J."/>
            <person name="White O."/>
            <person name="Olsen G.J."/>
            <person name="Zhou L."/>
            <person name="Fleischmann R.D."/>
            <person name="Sutton G.G."/>
            <person name="Blake J.A."/>
            <person name="FitzGerald L.M."/>
            <person name="Clayton R.A."/>
            <person name="Gocayne J.D."/>
            <person name="Kerlavage A.R."/>
            <person name="Dougherty B.A."/>
            <person name="Tomb J.-F."/>
            <person name="Adams M.D."/>
            <person name="Reich C.I."/>
            <person name="Overbeek R."/>
            <person name="Kirkness E.F."/>
            <person name="Weinstock K.G."/>
            <person name="Merrick J.M."/>
            <person name="Glodek A."/>
            <person name="Scott J.L."/>
            <person name="Geoghagen N.S.M."/>
            <person name="Weidman J.F."/>
            <person name="Fuhrmann J.L."/>
            <person name="Nguyen D."/>
            <person name="Utterback T.R."/>
            <person name="Kelley J.M."/>
            <person name="Peterson J.D."/>
            <person name="Sadow P.W."/>
            <person name="Hanna M.C."/>
            <person name="Cotton M.D."/>
            <person name="Roberts K.M."/>
            <person name="Hurst M.A."/>
            <person name="Kaine B.P."/>
            <person name="Borodovsky M."/>
            <person name="Klenk H.-P."/>
            <person name="Fraser C.M."/>
            <person name="Smith H.O."/>
            <person name="Woese C.R."/>
            <person name="Venter J.C."/>
        </authorList>
    </citation>
    <scope>NUCLEOTIDE SEQUENCE [LARGE SCALE GENOMIC DNA]</scope>
    <source>
        <strain>ATCC 43067 / DSM 2661 / JAL-1 / JCM 10045 / NBRC 100440</strain>
    </source>
</reference>
<name>Y1339_METJA</name>
<organism>
    <name type="scientific">Methanocaldococcus jannaschii (strain ATCC 43067 / DSM 2661 / JAL-1 / JCM 10045 / NBRC 100440)</name>
    <name type="common">Methanococcus jannaschii</name>
    <dbReference type="NCBI Taxonomy" id="243232"/>
    <lineage>
        <taxon>Archaea</taxon>
        <taxon>Methanobacteriati</taxon>
        <taxon>Methanobacteriota</taxon>
        <taxon>Methanomada group</taxon>
        <taxon>Methanococci</taxon>
        <taxon>Methanococcales</taxon>
        <taxon>Methanocaldococcaceae</taxon>
        <taxon>Methanocaldococcus</taxon>
    </lineage>
</organism>
<keyword id="KW-0342">GTP-binding</keyword>
<keyword id="KW-0547">Nucleotide-binding</keyword>
<keyword id="KW-1185">Reference proteome</keyword>
<sequence>MKKDEVKVVVIGSSDVGKTTLMENLIDKIGKVEYKGITTAIDYGSLTIKDKKIHFFGTPGQKRFEFMRELALKGTNFALVVLDASKGITKEDEEIIKLLESKKIPYGIFINKTDVGDIDTSEVYNFCNPKFIVKGCAVKKDGLDELINKIMSHT</sequence>
<comment type="similarity">
    <text evidence="2">To M.thermoautotrophicum MTH765.</text>
</comment>
<dbReference type="EMBL" id="L77117">
    <property type="protein sequence ID" value="AAB99349.1"/>
    <property type="molecule type" value="Genomic_DNA"/>
</dbReference>
<dbReference type="PIR" id="B64467">
    <property type="entry name" value="B64467"/>
</dbReference>
<dbReference type="RefSeq" id="WP_010870857.1">
    <property type="nucleotide sequence ID" value="NC_000909.1"/>
</dbReference>
<dbReference type="SMR" id="Q58735"/>
<dbReference type="FunCoup" id="Q58735">
    <property type="interactions" value="11"/>
</dbReference>
<dbReference type="STRING" id="243232.MJ_1339"/>
<dbReference type="PaxDb" id="243232-MJ_1339"/>
<dbReference type="EnsemblBacteria" id="AAB99349">
    <property type="protein sequence ID" value="AAB99349"/>
    <property type="gene ID" value="MJ_1339"/>
</dbReference>
<dbReference type="GeneID" id="1452242"/>
<dbReference type="KEGG" id="mja:MJ_1339"/>
<dbReference type="eggNOG" id="arCOG00362">
    <property type="taxonomic scope" value="Archaea"/>
</dbReference>
<dbReference type="HOGENOM" id="CLU_077970_2_1_2"/>
<dbReference type="InParanoid" id="Q58735"/>
<dbReference type="OrthoDB" id="49590at2157"/>
<dbReference type="PhylomeDB" id="Q58735"/>
<dbReference type="Proteomes" id="UP000000805">
    <property type="component" value="Chromosome"/>
</dbReference>
<dbReference type="GO" id="GO:0005525">
    <property type="term" value="F:GTP binding"/>
    <property type="evidence" value="ECO:0007669"/>
    <property type="project" value="UniProtKB-KW"/>
</dbReference>
<dbReference type="GO" id="GO:0003924">
    <property type="term" value="F:GTPase activity"/>
    <property type="evidence" value="ECO:0007669"/>
    <property type="project" value="InterPro"/>
</dbReference>
<dbReference type="CDD" id="cd00882">
    <property type="entry name" value="Ras_like_GTPase"/>
    <property type="match status" value="1"/>
</dbReference>
<dbReference type="Gene3D" id="3.40.50.300">
    <property type="entry name" value="P-loop containing nucleotide triphosphate hydrolases"/>
    <property type="match status" value="1"/>
</dbReference>
<dbReference type="InterPro" id="IPR052705">
    <property type="entry name" value="Gliding_Motility_GTPase"/>
</dbReference>
<dbReference type="InterPro" id="IPR027417">
    <property type="entry name" value="P-loop_NTPase"/>
</dbReference>
<dbReference type="InterPro" id="IPR005225">
    <property type="entry name" value="Small_GTP-bd"/>
</dbReference>
<dbReference type="InterPro" id="IPR016433">
    <property type="entry name" value="Small_GTPase_MJ1339"/>
</dbReference>
<dbReference type="InterPro" id="IPR000795">
    <property type="entry name" value="T_Tr_GTP-bd_dom"/>
</dbReference>
<dbReference type="NCBIfam" id="TIGR00231">
    <property type="entry name" value="small_GTP"/>
    <property type="match status" value="1"/>
</dbReference>
<dbReference type="PANTHER" id="PTHR42708">
    <property type="entry name" value="ATP/GTP-BINDING PROTEIN-RELATED"/>
    <property type="match status" value="1"/>
</dbReference>
<dbReference type="PANTHER" id="PTHR42708:SF1">
    <property type="entry name" value="GLIDING MOTILITY PROTEIN MGLA"/>
    <property type="match status" value="1"/>
</dbReference>
<dbReference type="Pfam" id="PF00009">
    <property type="entry name" value="GTP_EFTU"/>
    <property type="match status" value="1"/>
</dbReference>
<dbReference type="PIRSF" id="PIRSF004882">
    <property type="entry name" value="GTP_bind_MJ1339_prd"/>
    <property type="match status" value="1"/>
</dbReference>
<dbReference type="PRINTS" id="PR00449">
    <property type="entry name" value="RASTRNSFRMNG"/>
</dbReference>
<dbReference type="SUPFAM" id="SSF52540">
    <property type="entry name" value="P-loop containing nucleoside triphosphate hydrolases"/>
    <property type="match status" value="1"/>
</dbReference>